<name>SEY12_ENTH1</name>
<gene>
    <name type="ORF">EHI_054180</name>
</gene>
<dbReference type="EC" id="3.6.5.-" evidence="1"/>
<dbReference type="EMBL" id="DS571309">
    <property type="protein sequence ID" value="EAL44464.2"/>
    <property type="molecule type" value="Genomic_DNA"/>
</dbReference>
<dbReference type="RefSeq" id="XP_649850.2">
    <property type="nucleotide sequence ID" value="XM_644758.2"/>
</dbReference>
<dbReference type="SMR" id="C4M6U3"/>
<dbReference type="FunCoup" id="C4M6U3">
    <property type="interactions" value="41"/>
</dbReference>
<dbReference type="STRING" id="5759.C4M6U3"/>
<dbReference type="GeneID" id="3404147"/>
<dbReference type="KEGG" id="ehi:EHI_054180"/>
<dbReference type="VEuPathDB" id="AmoebaDB:EHI5A_040760"/>
<dbReference type="VEuPathDB" id="AmoebaDB:EHI7A_145120"/>
<dbReference type="VEuPathDB" id="AmoebaDB:EHI8A_163750"/>
<dbReference type="VEuPathDB" id="AmoebaDB:EHI_054180"/>
<dbReference type="VEuPathDB" id="AmoebaDB:KM1_233570"/>
<dbReference type="eggNOG" id="KOG2203">
    <property type="taxonomic scope" value="Eukaryota"/>
</dbReference>
<dbReference type="InParanoid" id="C4M6U3"/>
<dbReference type="OMA" id="SYAHEEE"/>
<dbReference type="OrthoDB" id="1597724at2759"/>
<dbReference type="Proteomes" id="UP000001926">
    <property type="component" value="Partially assembled WGS sequence"/>
</dbReference>
<dbReference type="GO" id="GO:0005783">
    <property type="term" value="C:endoplasmic reticulum"/>
    <property type="evidence" value="ECO:0000318"/>
    <property type="project" value="GO_Central"/>
</dbReference>
<dbReference type="GO" id="GO:0005789">
    <property type="term" value="C:endoplasmic reticulum membrane"/>
    <property type="evidence" value="ECO:0007669"/>
    <property type="project" value="UniProtKB-SubCell"/>
</dbReference>
<dbReference type="GO" id="GO:0005525">
    <property type="term" value="F:GTP binding"/>
    <property type="evidence" value="ECO:0007669"/>
    <property type="project" value="UniProtKB-UniRule"/>
</dbReference>
<dbReference type="GO" id="GO:0003924">
    <property type="term" value="F:GTPase activity"/>
    <property type="evidence" value="ECO:0000318"/>
    <property type="project" value="GO_Central"/>
</dbReference>
<dbReference type="GO" id="GO:0016320">
    <property type="term" value="P:endoplasmic reticulum membrane fusion"/>
    <property type="evidence" value="ECO:0000318"/>
    <property type="project" value="GO_Central"/>
</dbReference>
<dbReference type="FunFam" id="3.40.50.300:FF:000727">
    <property type="entry name" value="Protein SEY1 homolog"/>
    <property type="match status" value="1"/>
</dbReference>
<dbReference type="Gene3D" id="3.40.50.300">
    <property type="entry name" value="P-loop containing nucleotide triphosphate hydrolases"/>
    <property type="match status" value="1"/>
</dbReference>
<dbReference type="HAMAP" id="MF_03109">
    <property type="entry name" value="Sey1"/>
    <property type="match status" value="1"/>
</dbReference>
<dbReference type="InterPro" id="IPR030386">
    <property type="entry name" value="G_GB1_RHD3_dom"/>
</dbReference>
<dbReference type="InterPro" id="IPR027417">
    <property type="entry name" value="P-loop_NTPase"/>
</dbReference>
<dbReference type="InterPro" id="IPR008803">
    <property type="entry name" value="RHD3/Sey1"/>
</dbReference>
<dbReference type="InterPro" id="IPR046758">
    <property type="entry name" value="Sey1/RHD3-like_3HB"/>
</dbReference>
<dbReference type="PANTHER" id="PTHR45923">
    <property type="entry name" value="PROTEIN SEY1"/>
    <property type="match status" value="1"/>
</dbReference>
<dbReference type="PANTHER" id="PTHR45923:SF2">
    <property type="entry name" value="PROTEIN SEY1"/>
    <property type="match status" value="1"/>
</dbReference>
<dbReference type="Pfam" id="PF05879">
    <property type="entry name" value="RHD3_GTPase"/>
    <property type="match status" value="1"/>
</dbReference>
<dbReference type="Pfam" id="PF20428">
    <property type="entry name" value="Sey1_3HB"/>
    <property type="match status" value="1"/>
</dbReference>
<dbReference type="SUPFAM" id="SSF52540">
    <property type="entry name" value="P-loop containing nucleoside triphosphate hydrolases"/>
    <property type="match status" value="1"/>
</dbReference>
<dbReference type="PROSITE" id="PS51715">
    <property type="entry name" value="G_GB1_RHD3"/>
    <property type="match status" value="1"/>
</dbReference>
<sequence>MDEVSPTKHFTSKPLLPTKTPRDKAISHYVNALNSPRNVVKTETPECGIQIIDGDGNFASTDTRERPSLKNYILSKPEFLKRGMDYNAVGILGAQSSGKSTLLNYLFNTKFRILNEVMGRSRTTHGVWMALSGKESNIVVFDLEGTDGSAREDDYSFERKTSLFSLSVCSVLMVNLWSHDVGRFQASNMSLLKTVFELNLQLFVKEETPKTLIVFVIRDREADTPFDQIERDIMEDIMRIWDTVIPPEEFINSPINRFFDFQFTSLPHYEHFYENFVEEVNLMKKKFDPKNKDTYFLPQYNKEIPADGLSCFCEQIWETIKDNKDLDLPSQREMLSRYRCTEISNQIYKEFNDSIKGEMKILKKGNIIEDFKKVFTKQIDAALERYKEVTERYMETIVEEIEEQLKKQLCGLVESLFERQAELMEKAIGKRVKGEFTIIRNEYALLYNKKEFNPMKYQKYSQELSRTKAVIERDWRKQFDDSVPKFLAEKTKEKFNSVCKDIGIAYEDSVSKMTEVMKQHFGDYLESTIKPKITPYLEACKKDMWKNIRNVINIQFTNGFNKLEEGFKTCSNMNKDTIEEEIKKSKTDILNSIKELVIKRKIELPYLLERKFNNMFRFDNKGLPRKWEPTDDVDTLYFAARDETEDILDMYCYFRIEESDDQYKFTINYRDGDLPSESIETLPKGADEEKVILNHEERKELIETLNGFFEKGYLIALREKENSEIKYQIPLYLIVLVVFFGFDEFIAILTNPLLFILTLIIGGGVYIGYKLNLGGVAKNYIQYLLSMSLSSTMEYLRTIPFFTPLIDKVWPKDDNNTEETQEEIK</sequence>
<reference key="1">
    <citation type="journal article" date="2005" name="Nature">
        <title>The genome of the protist parasite Entamoeba histolytica.</title>
        <authorList>
            <person name="Loftus B.J."/>
            <person name="Anderson I."/>
            <person name="Davies R."/>
            <person name="Alsmark U.C."/>
            <person name="Samuelson J."/>
            <person name="Amedeo P."/>
            <person name="Roncaglia P."/>
            <person name="Berriman M."/>
            <person name="Hirt R.P."/>
            <person name="Mann B.J."/>
            <person name="Nozaki T."/>
            <person name="Suh B."/>
            <person name="Pop M."/>
            <person name="Duchene M."/>
            <person name="Ackers J."/>
            <person name="Tannich E."/>
            <person name="Leippe M."/>
            <person name="Hofer M."/>
            <person name="Bruchhaus I."/>
            <person name="Willhoeft U."/>
            <person name="Bhattacharya A."/>
            <person name="Chillingworth T."/>
            <person name="Churcher C.M."/>
            <person name="Hance Z."/>
            <person name="Harris B."/>
            <person name="Harris D."/>
            <person name="Jagels K."/>
            <person name="Moule S."/>
            <person name="Mungall K.L."/>
            <person name="Ormond D."/>
            <person name="Squares R."/>
            <person name="Whitehead S."/>
            <person name="Quail M.A."/>
            <person name="Rabbinowitsch E."/>
            <person name="Norbertczak H."/>
            <person name="Price C."/>
            <person name="Wang Z."/>
            <person name="Guillen N."/>
            <person name="Gilchrist C."/>
            <person name="Stroup S.E."/>
            <person name="Bhattacharya S."/>
            <person name="Lohia A."/>
            <person name="Foster P.G."/>
            <person name="Sicheritz-Ponten T."/>
            <person name="Weber C."/>
            <person name="Singh U."/>
            <person name="Mukherjee C."/>
            <person name="El-Sayed N.M.A."/>
            <person name="Petri W.A."/>
            <person name="Clark C.G."/>
            <person name="Embley T.M."/>
            <person name="Barrell B.G."/>
            <person name="Fraser C.M."/>
            <person name="Hall N."/>
        </authorList>
    </citation>
    <scope>NUCLEOTIDE SEQUENCE [LARGE SCALE GENOMIC DNA]</scope>
    <source>
        <strain>ATCC 30459 / HM-1:IMSS / ABRM</strain>
    </source>
</reference>
<reference key="2">
    <citation type="journal article" date="2010" name="PLoS Negl. Trop. Dis.">
        <title>New assembly, reannotation and analysis of the Entamoeba histolytica genome reveal new genomic features and protein content information.</title>
        <authorList>
            <person name="Lorenzi H.A."/>
            <person name="Puiu D."/>
            <person name="Miller J.R."/>
            <person name="Brinkac L.M."/>
            <person name="Amedeo P."/>
            <person name="Hall N."/>
            <person name="Caler E.V."/>
        </authorList>
    </citation>
    <scope>GENOME REANNOTATION</scope>
    <source>
        <strain>ATCC 30459 / HM-1:IMSS / ABRM</strain>
    </source>
</reference>
<protein>
    <recommendedName>
        <fullName evidence="1">Protein SEY1 homolog 2</fullName>
        <ecNumber evidence="1">3.6.5.-</ecNumber>
    </recommendedName>
</protein>
<evidence type="ECO:0000255" key="1">
    <source>
        <dbReference type="HAMAP-Rule" id="MF_03109"/>
    </source>
</evidence>
<evidence type="ECO:0000255" key="2">
    <source>
        <dbReference type="PROSITE-ProRule" id="PRU01052"/>
    </source>
</evidence>
<evidence type="ECO:0000256" key="3">
    <source>
        <dbReference type="SAM" id="MobiDB-lite"/>
    </source>
</evidence>
<comment type="function">
    <text evidence="1">Probable GTP-binding protein that may be involved in cell development.</text>
</comment>
<comment type="subcellular location">
    <subcellularLocation>
        <location evidence="1">Endoplasmic reticulum membrane</location>
        <topology evidence="1">Multi-pass membrane protein</topology>
    </subcellularLocation>
</comment>
<comment type="similarity">
    <text evidence="2">Belongs to the TRAFAC class dynamin-like GTPase superfamily. GB1/RHD3 GTPase family. RHD3 subfamily.</text>
</comment>
<accession>C4M6U3</accession>
<proteinExistence type="inferred from homology"/>
<feature type="chain" id="PRO_0000384947" description="Protein SEY1 homolog 2">
    <location>
        <begin position="1"/>
        <end position="825"/>
    </location>
</feature>
<feature type="topological domain" description="Cytoplasmic" evidence="1">
    <location>
        <begin position="1"/>
        <end position="728"/>
    </location>
</feature>
<feature type="transmembrane region" description="Helical" evidence="1">
    <location>
        <begin position="729"/>
        <end position="749"/>
    </location>
</feature>
<feature type="topological domain" description="Lumenal" evidence="1">
    <location>
        <begin position="750"/>
        <end position="752"/>
    </location>
</feature>
<feature type="transmembrane region" description="Helical" evidence="1">
    <location>
        <begin position="753"/>
        <end position="773"/>
    </location>
</feature>
<feature type="topological domain" description="Cytoplasmic" evidence="1">
    <location>
        <begin position="774"/>
        <end position="825"/>
    </location>
</feature>
<feature type="domain" description="GB1/RHD3-type G" evidence="2">
    <location>
        <begin position="83"/>
        <end position="305"/>
    </location>
</feature>
<feature type="region of interest" description="Disordered" evidence="3">
    <location>
        <begin position="1"/>
        <end position="21"/>
    </location>
</feature>
<feature type="coiled-coil region" evidence="1">
    <location>
        <begin position="373"/>
        <end position="397"/>
    </location>
</feature>
<feature type="binding site" evidence="1">
    <location>
        <begin position="93"/>
        <end position="100"/>
    </location>
    <ligand>
        <name>GTP</name>
        <dbReference type="ChEBI" id="CHEBI:37565"/>
    </ligand>
</feature>
<organism>
    <name type="scientific">Entamoeba histolytica (strain ATCC 30459 / HM-1:IMSS / ABRM)</name>
    <dbReference type="NCBI Taxonomy" id="294381"/>
    <lineage>
        <taxon>Eukaryota</taxon>
        <taxon>Amoebozoa</taxon>
        <taxon>Evosea</taxon>
        <taxon>Archamoebae</taxon>
        <taxon>Mastigamoebida</taxon>
        <taxon>Entamoebidae</taxon>
        <taxon>Entamoeba</taxon>
    </lineage>
</organism>
<keyword id="KW-0175">Coiled coil</keyword>
<keyword id="KW-0256">Endoplasmic reticulum</keyword>
<keyword id="KW-0342">GTP-binding</keyword>
<keyword id="KW-0378">Hydrolase</keyword>
<keyword id="KW-0472">Membrane</keyword>
<keyword id="KW-0547">Nucleotide-binding</keyword>
<keyword id="KW-1185">Reference proteome</keyword>
<keyword id="KW-0812">Transmembrane</keyword>
<keyword id="KW-1133">Transmembrane helix</keyword>